<sequence length="664" mass="71234">MMTKQALLEVHNLVREFPAGDSTVQILKNINLTIYEGELVAIVGQSGSGKSTLMNILGCLDRPTSGSYKVSGQETGKLEPDDLAKLRREYFGFIFQRYHLLGDLSAEGNVEVPAVYAGVTPAERKQRATALLTELGLGSKTENRPSQLSGGQQQRVSIARALMNGGDVILADEPTGALDSHSGVEVMRILRELNAAGHTVIIVTHDMQVAKNATRIIEISDGKIIADRENIPEYASELNKDPDAAPAIANKQSKGKSVSAFRSMLDRLSEAFQMALISMNAHRMRTFLTMLGIIIGIASVVTVVALGNGSQKQILENISSLGTNTITVFQGRGFGDNSKTANFKTLVPSDADALSSQPYVTAVSPMVSSSKTIRYKENEATATINGVSNDYFDVKGLTFKDGQSFDQRSVRDLTQDVVIDTNTQKQFFTDGSNPIGQVVLLGSVPARIIGIVEPQTSSMGSDDSLNVYMPYTTVMSRMLGQSNVRNIIVRINDQYSTSAAENAIVNLLTLRHGQQDIFTMNSDSIRQTIEKTTSTMTLLVSAIAVISLIVGGIGVMNIMLVSVTERTQEIGVRMAVGARQSDILQQFLIEAILVCLIGGVLGVLLSLGLGQLINKVAAGNFAVAYSTTSIVAAFVCSTLIGVVFGFLPARNAAQLDPVAALSRE</sequence>
<comment type="function">
    <text evidence="1">Part of the tripartite efflux system MacAB-TolC. MacB is a non-canonical ABC transporter that contains transmembrane domains (TMD), which form a pore in the inner membrane, and an ATP-binding domain (NBD), which is responsible for energy generation. Confers resistance against macrolides.</text>
</comment>
<comment type="subunit">
    <text evidence="1">Homodimer. Part of the tripartite efflux system MacAB-TolC, which is composed of an inner membrane transporter, MacB, a periplasmic membrane fusion protein, MacA, and an outer membrane component, TolC. The complex forms a large protein conduit and can translocate molecules across both the inner and outer membranes. Interacts with MacA.</text>
</comment>
<comment type="subcellular location">
    <subcellularLocation>
        <location evidence="1">Cell inner membrane</location>
        <topology evidence="1">Multi-pass membrane protein</topology>
    </subcellularLocation>
</comment>
<comment type="similarity">
    <text evidence="1">Belongs to the ABC transporter superfamily. Macrolide exporter (TC 3.A.1.122) family.</text>
</comment>
<protein>
    <recommendedName>
        <fullName evidence="1">Macrolide export ATP-binding/permease protein MacB</fullName>
        <ecNumber evidence="1">7.6.2.-</ecNumber>
    </recommendedName>
</protein>
<feature type="chain" id="PRO_0000269916" description="Macrolide export ATP-binding/permease protein MacB">
    <location>
        <begin position="1"/>
        <end position="664"/>
    </location>
</feature>
<feature type="transmembrane region" description="Helical" evidence="1">
    <location>
        <begin position="287"/>
        <end position="307"/>
    </location>
</feature>
<feature type="transmembrane region" description="Helical" evidence="1">
    <location>
        <begin position="543"/>
        <end position="563"/>
    </location>
</feature>
<feature type="transmembrane region" description="Helical" evidence="1">
    <location>
        <begin position="587"/>
        <end position="607"/>
    </location>
</feature>
<feature type="transmembrane region" description="Helical" evidence="1">
    <location>
        <begin position="629"/>
        <end position="649"/>
    </location>
</feature>
<feature type="domain" description="ABC transporter" evidence="1">
    <location>
        <begin position="8"/>
        <end position="246"/>
    </location>
</feature>
<feature type="binding site" evidence="1">
    <location>
        <begin position="44"/>
        <end position="51"/>
    </location>
    <ligand>
        <name>ATP</name>
        <dbReference type="ChEBI" id="CHEBI:30616"/>
    </ligand>
</feature>
<reference key="1">
    <citation type="journal article" date="2004" name="Nucleic Acids Res.">
        <title>Unique features revealed by the genome sequence of Acinetobacter sp. ADP1, a versatile and naturally transformation competent bacterium.</title>
        <authorList>
            <person name="Barbe V."/>
            <person name="Vallenet D."/>
            <person name="Fonknechten N."/>
            <person name="Kreimeyer A."/>
            <person name="Oztas S."/>
            <person name="Labarre L."/>
            <person name="Cruveiller S."/>
            <person name="Robert C."/>
            <person name="Duprat S."/>
            <person name="Wincker P."/>
            <person name="Ornston L.N."/>
            <person name="Weissenbach J."/>
            <person name="Marliere P."/>
            <person name="Cohen G.N."/>
            <person name="Medigue C."/>
        </authorList>
    </citation>
    <scope>NUCLEOTIDE SEQUENCE [LARGE SCALE GENOMIC DNA]</scope>
    <source>
        <strain>ATCC 33305 / BD413 / ADP1</strain>
    </source>
</reference>
<name>MACB_ACIAD</name>
<proteinExistence type="inferred from homology"/>
<gene>
    <name evidence="1" type="primary">macB</name>
    <name type="ordered locus">ACIAD3110</name>
</gene>
<evidence type="ECO:0000255" key="1">
    <source>
        <dbReference type="HAMAP-Rule" id="MF_01720"/>
    </source>
</evidence>
<keyword id="KW-0046">Antibiotic resistance</keyword>
<keyword id="KW-0067">ATP-binding</keyword>
<keyword id="KW-0997">Cell inner membrane</keyword>
<keyword id="KW-1003">Cell membrane</keyword>
<keyword id="KW-0472">Membrane</keyword>
<keyword id="KW-0547">Nucleotide-binding</keyword>
<keyword id="KW-1278">Translocase</keyword>
<keyword id="KW-0812">Transmembrane</keyword>
<keyword id="KW-1133">Transmembrane helix</keyword>
<keyword id="KW-0813">Transport</keyword>
<organism>
    <name type="scientific">Acinetobacter baylyi (strain ATCC 33305 / BD413 / ADP1)</name>
    <dbReference type="NCBI Taxonomy" id="62977"/>
    <lineage>
        <taxon>Bacteria</taxon>
        <taxon>Pseudomonadati</taxon>
        <taxon>Pseudomonadota</taxon>
        <taxon>Gammaproteobacteria</taxon>
        <taxon>Moraxellales</taxon>
        <taxon>Moraxellaceae</taxon>
        <taxon>Acinetobacter</taxon>
    </lineage>
</organism>
<accession>Q6F813</accession>
<dbReference type="EC" id="7.6.2.-" evidence="1"/>
<dbReference type="EMBL" id="CR543861">
    <property type="protein sequence ID" value="CAG69802.1"/>
    <property type="molecule type" value="Genomic_DNA"/>
</dbReference>
<dbReference type="SMR" id="Q6F813"/>
<dbReference type="STRING" id="202950.GCA_001485005_02762"/>
<dbReference type="KEGG" id="aci:ACIAD3110"/>
<dbReference type="eggNOG" id="COG0577">
    <property type="taxonomic scope" value="Bacteria"/>
</dbReference>
<dbReference type="eggNOG" id="COG1136">
    <property type="taxonomic scope" value="Bacteria"/>
</dbReference>
<dbReference type="HOGENOM" id="CLU_000604_78_1_6"/>
<dbReference type="Proteomes" id="UP000000430">
    <property type="component" value="Chromosome"/>
</dbReference>
<dbReference type="GO" id="GO:0005886">
    <property type="term" value="C:plasma membrane"/>
    <property type="evidence" value="ECO:0007669"/>
    <property type="project" value="UniProtKB-SubCell"/>
</dbReference>
<dbReference type="GO" id="GO:0005524">
    <property type="term" value="F:ATP binding"/>
    <property type="evidence" value="ECO:0007669"/>
    <property type="project" value="UniProtKB-KW"/>
</dbReference>
<dbReference type="GO" id="GO:0016887">
    <property type="term" value="F:ATP hydrolysis activity"/>
    <property type="evidence" value="ECO:0007669"/>
    <property type="project" value="InterPro"/>
</dbReference>
<dbReference type="GO" id="GO:0022857">
    <property type="term" value="F:transmembrane transporter activity"/>
    <property type="evidence" value="ECO:0007669"/>
    <property type="project" value="TreeGrafter"/>
</dbReference>
<dbReference type="GO" id="GO:0046677">
    <property type="term" value="P:response to antibiotic"/>
    <property type="evidence" value="ECO:0007669"/>
    <property type="project" value="UniProtKB-KW"/>
</dbReference>
<dbReference type="CDD" id="cd03255">
    <property type="entry name" value="ABC_MJ0796_LolCDE_FtsE"/>
    <property type="match status" value="1"/>
</dbReference>
<dbReference type="FunFam" id="3.40.50.300:FF:000032">
    <property type="entry name" value="Export ABC transporter ATP-binding protein"/>
    <property type="match status" value="1"/>
</dbReference>
<dbReference type="Gene3D" id="3.40.50.300">
    <property type="entry name" value="P-loop containing nucleotide triphosphate hydrolases"/>
    <property type="match status" value="1"/>
</dbReference>
<dbReference type="InterPro" id="IPR003593">
    <property type="entry name" value="AAA+_ATPase"/>
</dbReference>
<dbReference type="InterPro" id="IPR003838">
    <property type="entry name" value="ABC3_permease_C"/>
</dbReference>
<dbReference type="InterPro" id="IPR003439">
    <property type="entry name" value="ABC_transporter-like_ATP-bd"/>
</dbReference>
<dbReference type="InterPro" id="IPR017871">
    <property type="entry name" value="ABC_transporter-like_CS"/>
</dbReference>
<dbReference type="InterPro" id="IPR017911">
    <property type="entry name" value="MacB-like_ATP-bd"/>
</dbReference>
<dbReference type="InterPro" id="IPR025857">
    <property type="entry name" value="MacB_PCD"/>
</dbReference>
<dbReference type="InterPro" id="IPR050250">
    <property type="entry name" value="Macrolide_Exporter_MacB"/>
</dbReference>
<dbReference type="InterPro" id="IPR027417">
    <property type="entry name" value="P-loop_NTPase"/>
</dbReference>
<dbReference type="PANTHER" id="PTHR30572:SF14">
    <property type="entry name" value="MACROLIDE EXPORT ATP-BINDING_PERMEASE PROTEIN MACB"/>
    <property type="match status" value="1"/>
</dbReference>
<dbReference type="PANTHER" id="PTHR30572">
    <property type="entry name" value="MEMBRANE COMPONENT OF TRANSPORTER-RELATED"/>
    <property type="match status" value="1"/>
</dbReference>
<dbReference type="Pfam" id="PF00005">
    <property type="entry name" value="ABC_tran"/>
    <property type="match status" value="1"/>
</dbReference>
<dbReference type="Pfam" id="PF02687">
    <property type="entry name" value="FtsX"/>
    <property type="match status" value="1"/>
</dbReference>
<dbReference type="Pfam" id="PF12704">
    <property type="entry name" value="MacB_PCD"/>
    <property type="match status" value="1"/>
</dbReference>
<dbReference type="SMART" id="SM00382">
    <property type="entry name" value="AAA"/>
    <property type="match status" value="1"/>
</dbReference>
<dbReference type="SUPFAM" id="SSF52540">
    <property type="entry name" value="P-loop containing nucleoside triphosphate hydrolases"/>
    <property type="match status" value="1"/>
</dbReference>
<dbReference type="PROSITE" id="PS00211">
    <property type="entry name" value="ABC_TRANSPORTER_1"/>
    <property type="match status" value="1"/>
</dbReference>
<dbReference type="PROSITE" id="PS50893">
    <property type="entry name" value="ABC_TRANSPORTER_2"/>
    <property type="match status" value="1"/>
</dbReference>
<dbReference type="PROSITE" id="PS51267">
    <property type="entry name" value="MACB"/>
    <property type="match status" value="1"/>
</dbReference>